<name>Y5473_BURO0</name>
<accession>B1K943</accession>
<comment type="cofactor">
    <cofactor evidence="1">
        <name>Fe(2+)</name>
        <dbReference type="ChEBI" id="CHEBI:29033"/>
    </cofactor>
    <text evidence="1">Binds 1 Fe(2+) ion per subunit.</text>
</comment>
<comment type="cofactor">
    <cofactor evidence="1">
        <name>L-ascorbate</name>
        <dbReference type="ChEBI" id="CHEBI:38290"/>
    </cofactor>
</comment>
<keyword id="KW-0223">Dioxygenase</keyword>
<keyword id="KW-0408">Iron</keyword>
<keyword id="KW-0479">Metal-binding</keyword>
<keyword id="KW-0560">Oxidoreductase</keyword>
<keyword id="KW-0847">Vitamin C</keyword>
<dbReference type="EC" id="1.14.11.-" evidence="1"/>
<dbReference type="EMBL" id="CP000959">
    <property type="protein sequence ID" value="ACA94600.1"/>
    <property type="molecule type" value="Genomic_DNA"/>
</dbReference>
<dbReference type="RefSeq" id="WP_011547334.1">
    <property type="nucleotide sequence ID" value="NC_010515.1"/>
</dbReference>
<dbReference type="SMR" id="B1K943"/>
<dbReference type="GeneID" id="83052148"/>
<dbReference type="KEGG" id="bcm:Bcenmc03_5473"/>
<dbReference type="HOGENOM" id="CLU_106663_0_0_4"/>
<dbReference type="Proteomes" id="UP000002169">
    <property type="component" value="Chromosome 2"/>
</dbReference>
<dbReference type="GO" id="GO:0016706">
    <property type="term" value="F:2-oxoglutarate-dependent dioxygenase activity"/>
    <property type="evidence" value="ECO:0007669"/>
    <property type="project" value="UniProtKB-UniRule"/>
</dbReference>
<dbReference type="GO" id="GO:0005506">
    <property type="term" value="F:iron ion binding"/>
    <property type="evidence" value="ECO:0007669"/>
    <property type="project" value="UniProtKB-UniRule"/>
</dbReference>
<dbReference type="GO" id="GO:0031418">
    <property type="term" value="F:L-ascorbic acid binding"/>
    <property type="evidence" value="ECO:0007669"/>
    <property type="project" value="UniProtKB-KW"/>
</dbReference>
<dbReference type="GO" id="GO:0006974">
    <property type="term" value="P:DNA damage response"/>
    <property type="evidence" value="ECO:0007669"/>
    <property type="project" value="TreeGrafter"/>
</dbReference>
<dbReference type="GO" id="GO:0006879">
    <property type="term" value="P:intracellular iron ion homeostasis"/>
    <property type="evidence" value="ECO:0007669"/>
    <property type="project" value="TreeGrafter"/>
</dbReference>
<dbReference type="Gene3D" id="2.60.120.620">
    <property type="entry name" value="q2cbj1_9rhob like domain"/>
    <property type="match status" value="1"/>
</dbReference>
<dbReference type="Gene3D" id="4.10.860.20">
    <property type="entry name" value="Rabenosyn, Rab binding domain"/>
    <property type="match status" value="1"/>
</dbReference>
<dbReference type="HAMAP" id="MF_00657">
    <property type="entry name" value="Hydroxyl_YbiX"/>
    <property type="match status" value="1"/>
</dbReference>
<dbReference type="InterPro" id="IPR005123">
    <property type="entry name" value="Oxoglu/Fe-dep_dioxygenase_dom"/>
</dbReference>
<dbReference type="InterPro" id="IPR041097">
    <property type="entry name" value="PKHD_C"/>
</dbReference>
<dbReference type="InterPro" id="IPR023550">
    <property type="entry name" value="PKHD_hydroxylase"/>
</dbReference>
<dbReference type="InterPro" id="IPR006620">
    <property type="entry name" value="Pro_4_hyd_alph"/>
</dbReference>
<dbReference type="InterPro" id="IPR044862">
    <property type="entry name" value="Pro_4_hyd_alph_FE2OG_OXY"/>
</dbReference>
<dbReference type="NCBIfam" id="NF003973">
    <property type="entry name" value="PRK05467.1-2"/>
    <property type="match status" value="1"/>
</dbReference>
<dbReference type="NCBIfam" id="NF003974">
    <property type="entry name" value="PRK05467.1-3"/>
    <property type="match status" value="1"/>
</dbReference>
<dbReference type="NCBIfam" id="NF003975">
    <property type="entry name" value="PRK05467.1-4"/>
    <property type="match status" value="1"/>
</dbReference>
<dbReference type="PANTHER" id="PTHR41536">
    <property type="entry name" value="PKHD-TYPE HYDROXYLASE YBIX"/>
    <property type="match status" value="1"/>
</dbReference>
<dbReference type="PANTHER" id="PTHR41536:SF1">
    <property type="entry name" value="PKHD-TYPE HYDROXYLASE YBIX"/>
    <property type="match status" value="1"/>
</dbReference>
<dbReference type="Pfam" id="PF13640">
    <property type="entry name" value="2OG-FeII_Oxy_3"/>
    <property type="match status" value="1"/>
</dbReference>
<dbReference type="Pfam" id="PF18331">
    <property type="entry name" value="PKHD_C"/>
    <property type="match status" value="1"/>
</dbReference>
<dbReference type="SMART" id="SM00702">
    <property type="entry name" value="P4Hc"/>
    <property type="match status" value="1"/>
</dbReference>
<dbReference type="PROSITE" id="PS51471">
    <property type="entry name" value="FE2OG_OXY"/>
    <property type="match status" value="1"/>
</dbReference>
<gene>
    <name type="ordered locus">Bcenmc03_5473</name>
</gene>
<protein>
    <recommendedName>
        <fullName evidence="1">PKHD-type hydroxylase Bcenmc03_5473</fullName>
        <ecNumber evidence="1">1.14.11.-</ecNumber>
    </recommendedName>
</protein>
<proteinExistence type="inferred from homology"/>
<feature type="chain" id="PRO_0000346471" description="PKHD-type hydroxylase Bcenmc03_5473">
    <location>
        <begin position="1"/>
        <end position="227"/>
    </location>
</feature>
<feature type="domain" description="Fe2OG dioxygenase" evidence="1">
    <location>
        <begin position="78"/>
        <end position="178"/>
    </location>
</feature>
<feature type="binding site" evidence="1">
    <location>
        <position position="96"/>
    </location>
    <ligand>
        <name>Fe cation</name>
        <dbReference type="ChEBI" id="CHEBI:24875"/>
    </ligand>
</feature>
<feature type="binding site" evidence="1">
    <location>
        <position position="98"/>
    </location>
    <ligand>
        <name>Fe cation</name>
        <dbReference type="ChEBI" id="CHEBI:24875"/>
    </ligand>
</feature>
<feature type="binding site" evidence="1">
    <location>
        <position position="159"/>
    </location>
    <ligand>
        <name>Fe cation</name>
        <dbReference type="ChEBI" id="CHEBI:24875"/>
    </ligand>
</feature>
<feature type="binding site" evidence="1">
    <location>
        <position position="169"/>
    </location>
    <ligand>
        <name>2-oxoglutarate</name>
        <dbReference type="ChEBI" id="CHEBI:16810"/>
    </ligand>
</feature>
<organism>
    <name type="scientific">Burkholderia orbicola (strain MC0-3)</name>
    <dbReference type="NCBI Taxonomy" id="406425"/>
    <lineage>
        <taxon>Bacteria</taxon>
        <taxon>Pseudomonadati</taxon>
        <taxon>Pseudomonadota</taxon>
        <taxon>Betaproteobacteria</taxon>
        <taxon>Burkholderiales</taxon>
        <taxon>Burkholderiaceae</taxon>
        <taxon>Burkholderia</taxon>
        <taxon>Burkholderia cepacia complex</taxon>
        <taxon>Burkholderia orbicola</taxon>
    </lineage>
</organism>
<sequence>MMLHIPGVLTKAQVAQCREMLDTADWVDGNATSGAQSALAKRNRQLPEGSPVARTVGDAIQDALARHPLFFSAALPLKVFPPLFNRYEGGETFGTHVDNAIRLLRGTDFRVRSDLSATLFLEEPDAYDGGELCVEDTYGVHRAKLPAGDLVLYPASSLHHVTPVTRGERVASFFWIQSMVRDDGDRTLLFQLDTQIQALSAEKGAKDPVVISLTGIYHNLLRKWADA</sequence>
<reference key="1">
    <citation type="submission" date="2008-02" db="EMBL/GenBank/DDBJ databases">
        <title>Complete sequence of chromosome 2 of Burkholderia cenocepacia MC0-3.</title>
        <authorList>
            <person name="Copeland A."/>
            <person name="Lucas S."/>
            <person name="Lapidus A."/>
            <person name="Barry K."/>
            <person name="Bruce D."/>
            <person name="Goodwin L."/>
            <person name="Glavina del Rio T."/>
            <person name="Dalin E."/>
            <person name="Tice H."/>
            <person name="Pitluck S."/>
            <person name="Chain P."/>
            <person name="Malfatti S."/>
            <person name="Shin M."/>
            <person name="Vergez L."/>
            <person name="Schmutz J."/>
            <person name="Larimer F."/>
            <person name="Land M."/>
            <person name="Hauser L."/>
            <person name="Kyrpides N."/>
            <person name="Mikhailova N."/>
            <person name="Tiedje J."/>
            <person name="Richardson P."/>
        </authorList>
    </citation>
    <scope>NUCLEOTIDE SEQUENCE [LARGE SCALE GENOMIC DNA]</scope>
    <source>
        <strain>MC0-3</strain>
    </source>
</reference>
<evidence type="ECO:0000255" key="1">
    <source>
        <dbReference type="HAMAP-Rule" id="MF_00657"/>
    </source>
</evidence>